<accession>Q8ZM23</accession>
<feature type="chain" id="PRO_0000172785" description="Uronate isomerase">
    <location>
        <begin position="1"/>
        <end position="470"/>
    </location>
</feature>
<feature type="turn" evidence="2">
    <location>
        <begin position="7"/>
        <end position="10"/>
    </location>
</feature>
<feature type="helix" evidence="2">
    <location>
        <begin position="14"/>
        <end position="22"/>
    </location>
</feature>
<feature type="turn" evidence="2">
    <location>
        <begin position="23"/>
        <end position="26"/>
    </location>
</feature>
<feature type="strand" evidence="2">
    <location>
        <begin position="29"/>
        <end position="31"/>
    </location>
</feature>
<feature type="helix" evidence="2">
    <location>
        <begin position="38"/>
        <end position="43"/>
    </location>
</feature>
<feature type="helix" evidence="2">
    <location>
        <begin position="50"/>
        <end position="55"/>
    </location>
</feature>
<feature type="helix" evidence="2">
    <location>
        <begin position="60"/>
        <end position="67"/>
    </location>
</feature>
<feature type="helix" evidence="2">
    <location>
        <begin position="72"/>
        <end position="74"/>
    </location>
</feature>
<feature type="helix" evidence="2">
    <location>
        <begin position="82"/>
        <end position="92"/>
    </location>
</feature>
<feature type="helix" evidence="2">
    <location>
        <begin position="93"/>
        <end position="95"/>
    </location>
</feature>
<feature type="helix" evidence="2">
    <location>
        <begin position="100"/>
        <end position="110"/>
    </location>
</feature>
<feature type="turn" evidence="2">
    <location>
        <begin position="111"/>
        <end position="113"/>
    </location>
</feature>
<feature type="helix" evidence="2">
    <location>
        <begin position="122"/>
        <end position="136"/>
    </location>
</feature>
<feature type="helix" evidence="2">
    <location>
        <begin position="139"/>
        <end position="141"/>
    </location>
</feature>
<feature type="helix" evidence="2">
    <location>
        <begin position="143"/>
        <end position="149"/>
    </location>
</feature>
<feature type="strand" evidence="2">
    <location>
        <begin position="152"/>
        <end position="156"/>
    </location>
</feature>
<feature type="helix" evidence="2">
    <location>
        <begin position="166"/>
        <end position="173"/>
    </location>
</feature>
<feature type="strand" evidence="2">
    <location>
        <begin position="179"/>
        <end position="182"/>
    </location>
</feature>
<feature type="helix" evidence="2">
    <location>
        <begin position="188"/>
        <end position="191"/>
    </location>
</feature>
<feature type="helix" evidence="2">
    <location>
        <begin position="198"/>
        <end position="209"/>
    </location>
</feature>
<feature type="helix" evidence="2">
    <location>
        <begin position="216"/>
        <end position="232"/>
    </location>
</feature>
<feature type="strand" evidence="2">
    <location>
        <begin position="237"/>
        <end position="244"/>
    </location>
</feature>
<feature type="helix" evidence="2">
    <location>
        <begin position="253"/>
        <end position="264"/>
    </location>
</feature>
<feature type="helix" evidence="2">
    <location>
        <begin position="271"/>
        <end position="292"/>
    </location>
</feature>
<feature type="strand" evidence="2">
    <location>
        <begin position="295"/>
        <end position="300"/>
    </location>
</feature>
<feature type="helix" evidence="2">
    <location>
        <begin position="308"/>
        <end position="314"/>
    </location>
</feature>
<feature type="strand" evidence="2">
    <location>
        <begin position="316"/>
        <end position="319"/>
    </location>
</feature>
<feature type="helix" evidence="2">
    <location>
        <begin position="329"/>
        <end position="340"/>
    </location>
</feature>
<feature type="turn" evidence="2">
    <location>
        <begin position="341"/>
        <end position="343"/>
    </location>
</feature>
<feature type="strand" evidence="2">
    <location>
        <begin position="347"/>
        <end position="354"/>
    </location>
</feature>
<feature type="helix" evidence="2">
    <location>
        <begin position="355"/>
        <end position="357"/>
    </location>
</feature>
<feature type="helix" evidence="2">
    <location>
        <begin position="358"/>
        <end position="364"/>
    </location>
</feature>
<feature type="helix" evidence="2">
    <location>
        <begin position="365"/>
        <end position="367"/>
    </location>
</feature>
<feature type="strand" evidence="2">
    <location>
        <begin position="376"/>
        <end position="379"/>
    </location>
</feature>
<feature type="helix" evidence="2">
    <location>
        <begin position="384"/>
        <end position="386"/>
    </location>
</feature>
<feature type="helix" evidence="2">
    <location>
        <begin position="389"/>
        <end position="402"/>
    </location>
</feature>
<feature type="helix" evidence="2">
    <location>
        <begin position="405"/>
        <end position="407"/>
    </location>
</feature>
<feature type="turn" evidence="2">
    <location>
        <begin position="418"/>
        <end position="421"/>
    </location>
</feature>
<feature type="helix" evidence="2">
    <location>
        <begin position="422"/>
        <end position="440"/>
    </location>
</feature>
<feature type="helix" evidence="2">
    <location>
        <begin position="448"/>
        <end position="459"/>
    </location>
</feature>
<feature type="helix" evidence="2">
    <location>
        <begin position="461"/>
        <end position="466"/>
    </location>
</feature>
<keyword id="KW-0002">3D-structure</keyword>
<keyword id="KW-0413">Isomerase</keyword>
<keyword id="KW-1185">Reference proteome</keyword>
<dbReference type="EC" id="5.3.1.12" evidence="1"/>
<dbReference type="EMBL" id="AE006468">
    <property type="protein sequence ID" value="AAL22011.1"/>
    <property type="molecule type" value="Genomic_DNA"/>
</dbReference>
<dbReference type="RefSeq" id="NP_462052.1">
    <property type="nucleotide sequence ID" value="NC_003197.2"/>
</dbReference>
<dbReference type="RefSeq" id="WP_000190182.1">
    <property type="nucleotide sequence ID" value="NC_003197.2"/>
</dbReference>
<dbReference type="PDB" id="3IAC">
    <property type="method" value="X-ray"/>
    <property type="resolution" value="2.22 A"/>
    <property type="chains" value="A/B/C=1-470"/>
</dbReference>
<dbReference type="PDBsum" id="3IAC"/>
<dbReference type="SMR" id="Q8ZM23"/>
<dbReference type="STRING" id="99287.STM3137"/>
<dbReference type="PaxDb" id="99287-STM3137"/>
<dbReference type="GeneID" id="1254660"/>
<dbReference type="KEGG" id="stm:STM3137"/>
<dbReference type="PATRIC" id="fig|99287.12.peg.3325"/>
<dbReference type="HOGENOM" id="CLU_044465_1_0_6"/>
<dbReference type="OMA" id="IWHQCNE"/>
<dbReference type="PhylomeDB" id="Q8ZM23"/>
<dbReference type="BioCyc" id="SENT99287:STM3137-MONOMER"/>
<dbReference type="UniPathway" id="UPA00246"/>
<dbReference type="EvolutionaryTrace" id="Q8ZM23"/>
<dbReference type="Proteomes" id="UP000001014">
    <property type="component" value="Chromosome"/>
</dbReference>
<dbReference type="GO" id="GO:0008880">
    <property type="term" value="F:glucuronate isomerase activity"/>
    <property type="evidence" value="ECO:0007669"/>
    <property type="project" value="UniProtKB-UniRule"/>
</dbReference>
<dbReference type="GO" id="GO:0019698">
    <property type="term" value="P:D-galacturonate catabolic process"/>
    <property type="evidence" value="ECO:0000318"/>
    <property type="project" value="GO_Central"/>
</dbReference>
<dbReference type="GO" id="GO:0042840">
    <property type="term" value="P:D-glucuronate catabolic process"/>
    <property type="evidence" value="ECO:0000318"/>
    <property type="project" value="GO_Central"/>
</dbReference>
<dbReference type="Gene3D" id="3.20.20.140">
    <property type="entry name" value="Metal-dependent hydrolases"/>
    <property type="match status" value="1"/>
</dbReference>
<dbReference type="Gene3D" id="1.10.2020.10">
    <property type="entry name" value="uronate isomerase, domain 2, chain A"/>
    <property type="match status" value="1"/>
</dbReference>
<dbReference type="HAMAP" id="MF_00675">
    <property type="entry name" value="UxaC"/>
    <property type="match status" value="1"/>
</dbReference>
<dbReference type="InterPro" id="IPR032466">
    <property type="entry name" value="Metal_Hydrolase"/>
</dbReference>
<dbReference type="InterPro" id="IPR003766">
    <property type="entry name" value="Uronate_isomerase"/>
</dbReference>
<dbReference type="NCBIfam" id="NF002794">
    <property type="entry name" value="PRK02925.1"/>
    <property type="match status" value="1"/>
</dbReference>
<dbReference type="PANTHER" id="PTHR30068">
    <property type="entry name" value="URONATE ISOMERASE"/>
    <property type="match status" value="1"/>
</dbReference>
<dbReference type="PANTHER" id="PTHR30068:SF4">
    <property type="entry name" value="URONATE ISOMERASE"/>
    <property type="match status" value="1"/>
</dbReference>
<dbReference type="Pfam" id="PF02614">
    <property type="entry name" value="UxaC"/>
    <property type="match status" value="1"/>
</dbReference>
<dbReference type="SUPFAM" id="SSF51556">
    <property type="entry name" value="Metallo-dependent hydrolases"/>
    <property type="match status" value="1"/>
</dbReference>
<sequence length="470" mass="53610">MATFMTEDFLLKNDIARTLYHKYAAPMPIYDFHCHLSPQEIADDRRFDNLGQIWLEGDHYKWRALRSAGVDESLITGKETSDYEKYMAWANTVPKTLGNPLYHWTHLELRRPFGITGTLFGPDTAESIWTQCNEKLATPAFSARGIMQQMNVRMVGTTDDPIDSLEYHRQIAADDSIDIEVAPSWRPDKVFKIELDGFVDYLRKLEAAADVSITRFDDLRQALTRRLDHFAACGCRASDHGIETLRFAPVPDDAQLDAILGKRLAGETLSELEIAQFTTAVLVWLGRQYAARGWVMQLHIGAIRNNNTRMFRLLGPDTGFDSIGDNNISWALSRLLDSMDVTNELPKTILYCLNPRDNEVLATMIGNFQGPGIAGKVQFGSGWWFNDQKDGMLRQLEQLSQMGLLSQFVGMLTDSRSFLSYTRHEYFRRILCNLLGQWAQDGEIPDDEAMLSRMVQDICFNNAQRYFTIK</sequence>
<reference key="1">
    <citation type="journal article" date="2001" name="Nature">
        <title>Complete genome sequence of Salmonella enterica serovar Typhimurium LT2.</title>
        <authorList>
            <person name="McClelland M."/>
            <person name="Sanderson K.E."/>
            <person name="Spieth J."/>
            <person name="Clifton S.W."/>
            <person name="Latreille P."/>
            <person name="Courtney L."/>
            <person name="Porwollik S."/>
            <person name="Ali J."/>
            <person name="Dante M."/>
            <person name="Du F."/>
            <person name="Hou S."/>
            <person name="Layman D."/>
            <person name="Leonard S."/>
            <person name="Nguyen C."/>
            <person name="Scott K."/>
            <person name="Holmes A."/>
            <person name="Grewal N."/>
            <person name="Mulvaney E."/>
            <person name="Ryan E."/>
            <person name="Sun H."/>
            <person name="Florea L."/>
            <person name="Miller W."/>
            <person name="Stoneking T."/>
            <person name="Nhan M."/>
            <person name="Waterston R."/>
            <person name="Wilson R.K."/>
        </authorList>
    </citation>
    <scope>NUCLEOTIDE SEQUENCE [LARGE SCALE GENOMIC DNA]</scope>
    <source>
        <strain>LT2 / SGSC1412 / ATCC 700720</strain>
    </source>
</reference>
<name>UXAC_SALTY</name>
<protein>
    <recommendedName>
        <fullName evidence="1">Uronate isomerase</fullName>
        <ecNumber evidence="1">5.3.1.12</ecNumber>
    </recommendedName>
    <alternativeName>
        <fullName evidence="1">Glucuronate isomerase</fullName>
    </alternativeName>
    <alternativeName>
        <fullName evidence="1">Uronic isomerase</fullName>
    </alternativeName>
</protein>
<gene>
    <name evidence="1" type="primary">uxaC</name>
    <name type="ordered locus">STM3137</name>
</gene>
<comment type="catalytic activity">
    <reaction evidence="1">
        <text>D-glucuronate = D-fructuronate</text>
        <dbReference type="Rhea" id="RHEA:13049"/>
        <dbReference type="ChEBI" id="CHEBI:58720"/>
        <dbReference type="ChEBI" id="CHEBI:59863"/>
        <dbReference type="EC" id="5.3.1.12"/>
    </reaction>
</comment>
<comment type="catalytic activity">
    <reaction evidence="1">
        <text>aldehydo-D-galacturonate = keto-D-tagaturonate</text>
        <dbReference type="Rhea" id="RHEA:27702"/>
        <dbReference type="ChEBI" id="CHEBI:12952"/>
        <dbReference type="ChEBI" id="CHEBI:17886"/>
        <dbReference type="EC" id="5.3.1.12"/>
    </reaction>
</comment>
<comment type="pathway">
    <text evidence="1">Carbohydrate metabolism; pentose and glucuronate interconversion.</text>
</comment>
<comment type="similarity">
    <text evidence="1">Belongs to the metallo-dependent hydrolases superfamily. Uronate isomerase family.</text>
</comment>
<evidence type="ECO:0000255" key="1">
    <source>
        <dbReference type="HAMAP-Rule" id="MF_00675"/>
    </source>
</evidence>
<evidence type="ECO:0007829" key="2">
    <source>
        <dbReference type="PDB" id="3IAC"/>
    </source>
</evidence>
<organism>
    <name type="scientific">Salmonella typhimurium (strain LT2 / SGSC1412 / ATCC 700720)</name>
    <dbReference type="NCBI Taxonomy" id="99287"/>
    <lineage>
        <taxon>Bacteria</taxon>
        <taxon>Pseudomonadati</taxon>
        <taxon>Pseudomonadota</taxon>
        <taxon>Gammaproteobacteria</taxon>
        <taxon>Enterobacterales</taxon>
        <taxon>Enterobacteriaceae</taxon>
        <taxon>Salmonella</taxon>
    </lineage>
</organism>
<proteinExistence type="evidence at protein level"/>